<accession>B0YAA4</accession>
<feature type="signal peptide" evidence="2">
    <location>
        <begin position="1"/>
        <end position="16"/>
    </location>
</feature>
<feature type="chain" id="PRO_0000393675" description="Probable exopolygalacturonase B">
    <location>
        <begin position="17"/>
        <end position="453"/>
    </location>
</feature>
<feature type="repeat" description="PbH1 1">
    <location>
        <begin position="295"/>
        <end position="316"/>
    </location>
</feature>
<feature type="repeat" description="PbH1 2">
    <location>
        <begin position="327"/>
        <end position="348"/>
    </location>
</feature>
<feature type="repeat" description="PbH1 3">
    <location>
        <begin position="362"/>
        <end position="405"/>
    </location>
</feature>
<feature type="active site" description="Proton donor" evidence="1">
    <location>
        <position position="255"/>
    </location>
</feature>
<feature type="active site" evidence="1">
    <location>
        <position position="278"/>
    </location>
</feature>
<feature type="glycosylation site" description="N-linked (GlcNAc...) asparagine" evidence="2">
    <location>
        <position position="185"/>
    </location>
</feature>
<feature type="glycosylation site" description="N-linked (GlcNAc...) asparagine" evidence="2">
    <location>
        <position position="225"/>
    </location>
</feature>
<feature type="glycosylation site" description="N-linked (GlcNAc...) asparagine" evidence="2">
    <location>
        <position position="263"/>
    </location>
</feature>
<feature type="glycosylation site" description="N-linked (GlcNAc...) asparagine" evidence="2">
    <location>
        <position position="275"/>
    </location>
</feature>
<feature type="glycosylation site" description="N-linked (GlcNAc...) asparagine" evidence="2">
    <location>
        <position position="302"/>
    </location>
</feature>
<feature type="glycosylation site" description="N-linked (GlcNAc...) asparagine" evidence="2">
    <location>
        <position position="329"/>
    </location>
</feature>
<feature type="glycosylation site" description="N-linked (GlcNAc...) asparagine" evidence="2">
    <location>
        <position position="354"/>
    </location>
</feature>
<feature type="glycosylation site" description="N-linked (GlcNAc...) asparagine" evidence="2">
    <location>
        <position position="366"/>
    </location>
</feature>
<feature type="glycosylation site" description="N-linked (GlcNAc...) asparagine" evidence="2">
    <location>
        <position position="436"/>
    </location>
</feature>
<feature type="disulfide bond" evidence="1">
    <location>
        <begin position="257"/>
        <end position="274"/>
    </location>
</feature>
<feature type="disulfide bond" evidence="1">
    <location>
        <begin position="392"/>
        <end position="398"/>
    </location>
</feature>
<protein>
    <recommendedName>
        <fullName>Probable exopolygalacturonase B</fullName>
        <ecNumber>3.2.1.67</ecNumber>
    </recommendedName>
    <alternativeName>
        <fullName>Galacturan 1,4-alpha-galacturonidase B</fullName>
    </alternativeName>
    <alternativeName>
        <fullName>Poly(1,4-alpha-D-galacturonide)galacturonohydrolase B</fullName>
    </alternativeName>
</protein>
<comment type="function">
    <text evidence="1">Specific in hydrolyzing the terminal glycosidic bond of polygalacturonic acid and oligogalacturonates.</text>
</comment>
<comment type="catalytic activity">
    <reaction>
        <text>[(1-&gt;4)-alpha-D-galacturonosyl](n) + H2O = alpha-D-galacturonate + [(1-&gt;4)-alpha-D-galacturonosyl](n-1)</text>
        <dbReference type="Rhea" id="RHEA:14117"/>
        <dbReference type="Rhea" id="RHEA-COMP:14570"/>
        <dbReference type="Rhea" id="RHEA-COMP:14572"/>
        <dbReference type="ChEBI" id="CHEBI:15377"/>
        <dbReference type="ChEBI" id="CHEBI:58658"/>
        <dbReference type="ChEBI" id="CHEBI:140523"/>
        <dbReference type="EC" id="3.2.1.67"/>
    </reaction>
</comment>
<comment type="subcellular location">
    <subcellularLocation>
        <location evidence="1">Secreted</location>
    </subcellularLocation>
</comment>
<comment type="similarity">
    <text evidence="3">Belongs to the glycosyl hydrolase 28 family.</text>
</comment>
<comment type="sequence caution" evidence="3">
    <conflict type="erroneous gene model prediction">
        <sequence resource="EMBL-CDS" id="EDP48947"/>
    </conflict>
</comment>
<name>PGXB_ASPFC</name>
<evidence type="ECO:0000250" key="1"/>
<evidence type="ECO:0000255" key="2"/>
<evidence type="ECO:0000305" key="3"/>
<organism>
    <name type="scientific">Aspergillus fumigatus (strain CBS 144.89 / FGSC A1163 / CEA10)</name>
    <name type="common">Neosartorya fumigata</name>
    <dbReference type="NCBI Taxonomy" id="451804"/>
    <lineage>
        <taxon>Eukaryota</taxon>
        <taxon>Fungi</taxon>
        <taxon>Dikarya</taxon>
        <taxon>Ascomycota</taxon>
        <taxon>Pezizomycotina</taxon>
        <taxon>Eurotiomycetes</taxon>
        <taxon>Eurotiomycetidae</taxon>
        <taxon>Eurotiales</taxon>
        <taxon>Aspergillaceae</taxon>
        <taxon>Aspergillus</taxon>
        <taxon>Aspergillus subgen. Fumigati</taxon>
    </lineage>
</organism>
<gene>
    <name type="primary">pgxB</name>
    <name type="ORF">AFUB_083960</name>
</gene>
<sequence length="453" mass="50030">MKFFALAALFASTVNSIAVDGLIPGARVIPANDVVALKKAGAYHQKHHHRRTVIIRSSSSDEDDVSADFLWGIKRANHGGRLLLQNGKKYVIGKKLDLTFLKDIEVQLDGELKFTNDVPYWQANNFYYDFQKSISFWRWGGEDIKIFGSGVLNGNGQRWYNEFAGQEILDPNNKYYRPILFVTENATRVSVEGITQLNSPCWTNFFVRTKDISFDNVFIHAYSTNASALPKNTDGFDTLNVDGLTVTNTRVDIGDDCLSPKPNTTNVFVKNLWCNGTHGASMGSIGQYPGVLDIIENVWIENVTLLNGENGARLKAWAGPDVGYGRINNVTYKNIHVENTDNPIVLDQCYFNINATQCAAYPSRVNFTNIVFEDIYGTSSGKRGKVVADLTCSPNAVCSGIRLKNIHLTSPAGSPPVIVCDGIQGDIGVECQSSSNSTTKRSVDLARSLKYRA</sequence>
<proteinExistence type="inferred from homology"/>
<reference key="1">
    <citation type="journal article" date="2008" name="PLoS Genet.">
        <title>Genomic islands in the pathogenic filamentous fungus Aspergillus fumigatus.</title>
        <authorList>
            <person name="Fedorova N.D."/>
            <person name="Khaldi N."/>
            <person name="Joardar V.S."/>
            <person name="Maiti R."/>
            <person name="Amedeo P."/>
            <person name="Anderson M.J."/>
            <person name="Crabtree J."/>
            <person name="Silva J.C."/>
            <person name="Badger J.H."/>
            <person name="Albarraq A."/>
            <person name="Angiuoli S."/>
            <person name="Bussey H."/>
            <person name="Bowyer P."/>
            <person name="Cotty P.J."/>
            <person name="Dyer P.S."/>
            <person name="Egan A."/>
            <person name="Galens K."/>
            <person name="Fraser-Liggett C.M."/>
            <person name="Haas B.J."/>
            <person name="Inman J.M."/>
            <person name="Kent R."/>
            <person name="Lemieux S."/>
            <person name="Malavazi I."/>
            <person name="Orvis J."/>
            <person name="Roemer T."/>
            <person name="Ronning C.M."/>
            <person name="Sundaram J.P."/>
            <person name="Sutton G."/>
            <person name="Turner G."/>
            <person name="Venter J.C."/>
            <person name="White O.R."/>
            <person name="Whitty B.R."/>
            <person name="Youngman P."/>
            <person name="Wolfe K.H."/>
            <person name="Goldman G.H."/>
            <person name="Wortman J.R."/>
            <person name="Jiang B."/>
            <person name="Denning D.W."/>
            <person name="Nierman W.C."/>
        </authorList>
    </citation>
    <scope>NUCLEOTIDE SEQUENCE [LARGE SCALE GENOMIC DNA]</scope>
    <source>
        <strain>CBS 144.89 / FGSC A1163 / CEA10</strain>
    </source>
</reference>
<keyword id="KW-0961">Cell wall biogenesis/degradation</keyword>
<keyword id="KW-1015">Disulfide bond</keyword>
<keyword id="KW-0325">Glycoprotein</keyword>
<keyword id="KW-0326">Glycosidase</keyword>
<keyword id="KW-0378">Hydrolase</keyword>
<keyword id="KW-0677">Repeat</keyword>
<keyword id="KW-0964">Secreted</keyword>
<keyword id="KW-0732">Signal</keyword>
<dbReference type="EC" id="3.2.1.67"/>
<dbReference type="EMBL" id="DS499600">
    <property type="protein sequence ID" value="EDP48947.1"/>
    <property type="status" value="ALT_SEQ"/>
    <property type="molecule type" value="Genomic_DNA"/>
</dbReference>
<dbReference type="SMR" id="B0YAA4"/>
<dbReference type="GlyCosmos" id="B0YAA4">
    <property type="glycosylation" value="9 sites, No reported glycans"/>
</dbReference>
<dbReference type="OrthoDB" id="79865at5052"/>
<dbReference type="PhylomeDB" id="B0YAA4"/>
<dbReference type="Proteomes" id="UP000001699">
    <property type="component" value="Unassembled WGS sequence"/>
</dbReference>
<dbReference type="GO" id="GO:0005576">
    <property type="term" value="C:extracellular region"/>
    <property type="evidence" value="ECO:0000250"/>
    <property type="project" value="UniProtKB"/>
</dbReference>
<dbReference type="GO" id="GO:0047911">
    <property type="term" value="F:galacturan 1,4-alpha-galacturonidase activity"/>
    <property type="evidence" value="ECO:0007669"/>
    <property type="project" value="UniProtKB-EC"/>
</dbReference>
<dbReference type="GO" id="GO:0004650">
    <property type="term" value="F:polygalacturonase activity"/>
    <property type="evidence" value="ECO:0000250"/>
    <property type="project" value="UniProtKB"/>
</dbReference>
<dbReference type="GO" id="GO:0071555">
    <property type="term" value="P:cell wall organization"/>
    <property type="evidence" value="ECO:0007669"/>
    <property type="project" value="UniProtKB-KW"/>
</dbReference>
<dbReference type="GO" id="GO:0045490">
    <property type="term" value="P:pectin catabolic process"/>
    <property type="evidence" value="ECO:0000250"/>
    <property type="project" value="UniProtKB"/>
</dbReference>
<dbReference type="FunFam" id="2.160.20.10:FF:000040">
    <property type="entry name" value="Probable exopolygalacturonase B"/>
    <property type="match status" value="1"/>
</dbReference>
<dbReference type="Gene3D" id="2.160.20.10">
    <property type="entry name" value="Single-stranded right-handed beta-helix, Pectin lyase-like"/>
    <property type="match status" value="1"/>
</dbReference>
<dbReference type="InterPro" id="IPR000743">
    <property type="entry name" value="Glyco_hydro_28"/>
</dbReference>
<dbReference type="InterPro" id="IPR012334">
    <property type="entry name" value="Pectin_lyas_fold"/>
</dbReference>
<dbReference type="InterPro" id="IPR011050">
    <property type="entry name" value="Pectin_lyase_fold/virulence"/>
</dbReference>
<dbReference type="PANTHER" id="PTHR31736">
    <property type="match status" value="1"/>
</dbReference>
<dbReference type="PANTHER" id="PTHR31736:SF6">
    <property type="entry name" value="EXOPOLYGALACTURONASE B-RELATED"/>
    <property type="match status" value="1"/>
</dbReference>
<dbReference type="Pfam" id="PF00295">
    <property type="entry name" value="Glyco_hydro_28"/>
    <property type="match status" value="1"/>
</dbReference>
<dbReference type="SUPFAM" id="SSF51126">
    <property type="entry name" value="Pectin lyase-like"/>
    <property type="match status" value="1"/>
</dbReference>